<organism>
    <name type="scientific">Natronomonas pharaonis (strain ATCC 35678 / DSM 2160 / CIP 103997 / JCM 8858 / NBRC 14720 / NCIMB 2260 / Gabara)</name>
    <name type="common">Halobacterium pharaonis</name>
    <dbReference type="NCBI Taxonomy" id="348780"/>
    <lineage>
        <taxon>Archaea</taxon>
        <taxon>Methanobacteriati</taxon>
        <taxon>Methanobacteriota</taxon>
        <taxon>Stenosarchaea group</taxon>
        <taxon>Halobacteria</taxon>
        <taxon>Halobacteriales</taxon>
        <taxon>Haloarculaceae</taxon>
        <taxon>Natronomonas</taxon>
    </lineage>
</organism>
<dbReference type="EC" id="2.4.2.57" evidence="1"/>
<dbReference type="EMBL" id="CR936257">
    <property type="protein sequence ID" value="CAI50070.1"/>
    <property type="molecule type" value="Genomic_DNA"/>
</dbReference>
<dbReference type="RefSeq" id="WP_011323686.1">
    <property type="nucleotide sequence ID" value="NC_007426.1"/>
</dbReference>
<dbReference type="SMR" id="Q3IP82"/>
<dbReference type="STRING" id="348780.NP_3958A"/>
<dbReference type="EnsemblBacteria" id="CAI50070">
    <property type="protein sequence ID" value="CAI50070"/>
    <property type="gene ID" value="NP_3958A"/>
</dbReference>
<dbReference type="GeneID" id="3702662"/>
<dbReference type="KEGG" id="nph:NP_3958A"/>
<dbReference type="eggNOG" id="arCOG02013">
    <property type="taxonomic scope" value="Archaea"/>
</dbReference>
<dbReference type="HOGENOM" id="CLU_025040_6_0_2"/>
<dbReference type="OrthoDB" id="9827at2157"/>
<dbReference type="Proteomes" id="UP000002698">
    <property type="component" value="Chromosome"/>
</dbReference>
<dbReference type="GO" id="GO:0005829">
    <property type="term" value="C:cytosol"/>
    <property type="evidence" value="ECO:0007669"/>
    <property type="project" value="TreeGrafter"/>
</dbReference>
<dbReference type="GO" id="GO:0004645">
    <property type="term" value="F:1,4-alpha-oligoglucan phosphorylase activity"/>
    <property type="evidence" value="ECO:0007669"/>
    <property type="project" value="InterPro"/>
</dbReference>
<dbReference type="GO" id="GO:0016208">
    <property type="term" value="F:AMP binding"/>
    <property type="evidence" value="ECO:0007669"/>
    <property type="project" value="UniProtKB-UniRule"/>
</dbReference>
<dbReference type="GO" id="GO:0016763">
    <property type="term" value="F:pentosyltransferase activity"/>
    <property type="evidence" value="ECO:0007669"/>
    <property type="project" value="UniProtKB-UniRule"/>
</dbReference>
<dbReference type="GO" id="GO:0006196">
    <property type="term" value="P:AMP catabolic process"/>
    <property type="evidence" value="ECO:0007669"/>
    <property type="project" value="UniProtKB-UniRule"/>
</dbReference>
<dbReference type="GO" id="GO:0046125">
    <property type="term" value="P:pyrimidine deoxyribonucleoside metabolic process"/>
    <property type="evidence" value="ECO:0007669"/>
    <property type="project" value="InterPro"/>
</dbReference>
<dbReference type="GO" id="GO:0006206">
    <property type="term" value="P:pyrimidine nucleobase metabolic process"/>
    <property type="evidence" value="ECO:0007669"/>
    <property type="project" value="InterPro"/>
</dbReference>
<dbReference type="Gene3D" id="1.20.970.50">
    <property type="match status" value="1"/>
</dbReference>
<dbReference type="Gene3D" id="2.40.40.20">
    <property type="match status" value="1"/>
</dbReference>
<dbReference type="Gene3D" id="3.40.1030.10">
    <property type="entry name" value="Nucleoside phosphorylase/phosphoribosyltransferase catalytic domain"/>
    <property type="match status" value="1"/>
</dbReference>
<dbReference type="Gene3D" id="3.90.1170.30">
    <property type="entry name" value="Pyrimidine nucleoside phosphorylase-like, C-terminal domain"/>
    <property type="match status" value="1"/>
</dbReference>
<dbReference type="HAMAP" id="MF_02132">
    <property type="entry name" value="AMP_phosphorylase"/>
    <property type="match status" value="1"/>
</dbReference>
<dbReference type="InterPro" id="IPR017713">
    <property type="entry name" value="AMP_phosphorylase"/>
</dbReference>
<dbReference type="InterPro" id="IPR000312">
    <property type="entry name" value="Glycosyl_Trfase_fam3"/>
</dbReference>
<dbReference type="InterPro" id="IPR017459">
    <property type="entry name" value="Glycosyl_Trfase_fam3_N_dom"/>
</dbReference>
<dbReference type="InterPro" id="IPR036320">
    <property type="entry name" value="Glycosyl_Trfase_fam3_N_dom_sf"/>
</dbReference>
<dbReference type="InterPro" id="IPR035902">
    <property type="entry name" value="Nuc_phospho_transferase"/>
</dbReference>
<dbReference type="InterPro" id="IPR036566">
    <property type="entry name" value="PYNP-like_C_sf"/>
</dbReference>
<dbReference type="InterPro" id="IPR013102">
    <property type="entry name" value="PYNP_C"/>
</dbReference>
<dbReference type="InterPro" id="IPR017872">
    <property type="entry name" value="Pyrmidine_PPase_CS"/>
</dbReference>
<dbReference type="InterPro" id="IPR013466">
    <property type="entry name" value="Thymidine/AMP_Pase"/>
</dbReference>
<dbReference type="InterPro" id="IPR000053">
    <property type="entry name" value="Thymidine/pyrmidine_PPase"/>
</dbReference>
<dbReference type="NCBIfam" id="TIGR03327">
    <property type="entry name" value="AMP_phos"/>
    <property type="match status" value="1"/>
</dbReference>
<dbReference type="NCBIfam" id="TIGR02645">
    <property type="entry name" value="ARCH_P_rylase"/>
    <property type="match status" value="1"/>
</dbReference>
<dbReference type="NCBIfam" id="NF003338">
    <property type="entry name" value="PRK04350.1"/>
    <property type="match status" value="1"/>
</dbReference>
<dbReference type="PANTHER" id="PTHR10515">
    <property type="entry name" value="THYMIDINE PHOSPHORYLASE"/>
    <property type="match status" value="1"/>
</dbReference>
<dbReference type="PANTHER" id="PTHR10515:SF0">
    <property type="entry name" value="THYMIDINE PHOSPHORYLASE"/>
    <property type="match status" value="1"/>
</dbReference>
<dbReference type="Pfam" id="PF02885">
    <property type="entry name" value="Glycos_trans_3N"/>
    <property type="match status" value="1"/>
</dbReference>
<dbReference type="Pfam" id="PF00591">
    <property type="entry name" value="Glycos_transf_3"/>
    <property type="match status" value="1"/>
</dbReference>
<dbReference type="Pfam" id="PF07831">
    <property type="entry name" value="PYNP_C"/>
    <property type="match status" value="1"/>
</dbReference>
<dbReference type="SMART" id="SM00941">
    <property type="entry name" value="PYNP_C"/>
    <property type="match status" value="1"/>
</dbReference>
<dbReference type="SUPFAM" id="SSF52418">
    <property type="entry name" value="Nucleoside phosphorylase/phosphoribosyltransferase catalytic domain"/>
    <property type="match status" value="1"/>
</dbReference>
<dbReference type="SUPFAM" id="SSF47648">
    <property type="entry name" value="Nucleoside phosphorylase/phosphoribosyltransferase N-terminal domain"/>
    <property type="match status" value="1"/>
</dbReference>
<dbReference type="SUPFAM" id="SSF54680">
    <property type="entry name" value="Pyrimidine nucleoside phosphorylase C-terminal domain"/>
    <property type="match status" value="1"/>
</dbReference>
<dbReference type="PROSITE" id="PS00647">
    <property type="entry name" value="THYMID_PHOSPHORYLASE"/>
    <property type="match status" value="1"/>
</dbReference>
<evidence type="ECO:0000255" key="1">
    <source>
        <dbReference type="HAMAP-Rule" id="MF_02132"/>
    </source>
</evidence>
<name>AMPPA_NATPD</name>
<feature type="chain" id="PRO_0000314731" description="AMP phosphorylase">
    <location>
        <begin position="1"/>
        <end position="500"/>
    </location>
</feature>
<feature type="active site" description="Proton donor" evidence="1">
    <location>
        <position position="254"/>
    </location>
</feature>
<feature type="binding site" evidence="1">
    <location>
        <position position="166"/>
    </location>
    <ligand>
        <name>AMP</name>
        <dbReference type="ChEBI" id="CHEBI:456215"/>
    </ligand>
</feature>
<feature type="binding site" evidence="1">
    <location>
        <begin position="192"/>
        <end position="197"/>
    </location>
    <ligand>
        <name>AMP</name>
        <dbReference type="ChEBI" id="CHEBI:456215"/>
    </ligand>
</feature>
<feature type="binding site" evidence="1">
    <location>
        <position position="201"/>
    </location>
    <ligand>
        <name>AMP</name>
        <dbReference type="ChEBI" id="CHEBI:456215"/>
    </ligand>
</feature>
<feature type="binding site" evidence="1">
    <location>
        <position position="262"/>
    </location>
    <ligand>
        <name>AMP</name>
        <dbReference type="ChEBI" id="CHEBI:456215"/>
    </ligand>
</feature>
<feature type="binding site" evidence="1">
    <location>
        <position position="286"/>
    </location>
    <ligand>
        <name>AMP</name>
        <dbReference type="ChEBI" id="CHEBI:456215"/>
    </ligand>
</feature>
<protein>
    <recommendedName>
        <fullName evidence="1">AMP phosphorylase</fullName>
        <shortName evidence="1">AMPpase</shortName>
        <ecNumber evidence="1">2.4.2.57</ecNumber>
    </recommendedName>
    <alternativeName>
        <fullName evidence="1">Nucleoside monophosphate phosphorylase</fullName>
        <shortName evidence="1">NMP phosphorylase</shortName>
    </alternativeName>
</protein>
<accession>Q3IP82</accession>
<gene>
    <name type="primary">deoA</name>
    <name type="ordered locus">NP_3958A</name>
</gene>
<sequence>MELTVEPIDIGTERPVVLLNCADAETLGVHSLDRVEIDWDGTTEVGIVKVTDELVAAGRIGASHGFPEITDGTVVAVTPAGQPESVESIRRKLDGRELDSDELGAIVADIEADRLSDLELSAYVCASHANGLSLEETKQLTERMAEVGKQLSWEQPVVADKHSIGGVAGNRVTPVVVAIVAAAGLTIPKTSSRAVTSPAGTADTMEVFCPVEFSREEIRDIVTETGGCLVWGGAVDLSPVDDKVIRAQRPLSLDPPGQVIASVLSKKQSAGSSHIVVDIPYGAGAKVTSLSEARDLADDFRRVGDHLGLTIECALTRGSDPIGHGIGPVLEARDVLAVLEGEGPEPLRIKSLRLADIIFDMAREAGMPVDDRSAADILDSGAALSKFRDIVAVQGGDPDVSRDDLQPGDRTETVTADTDGLVVDVDNQAVSQLARRAGAPNDHGAGVVIHRRTGDKAVAGDVLYTIHAESSDRLEAAREYAAGDEIVRVGGRDEALVERR</sequence>
<proteinExistence type="inferred from homology"/>
<comment type="function">
    <text evidence="1">Catalyzes the conversion of AMP and phosphate to adenine and ribose 1,5-bisphosphate (R15P). Exhibits phosphorylase activity toward CMP and UMP in addition to AMP. Functions in an archaeal AMP degradation pathway, together with R15P isomerase and RubisCO.</text>
</comment>
<comment type="catalytic activity">
    <reaction evidence="1">
        <text>AMP + phosphate = alpha-D-ribose 1,5-bisphosphate + adenine</text>
        <dbReference type="Rhea" id="RHEA:36975"/>
        <dbReference type="ChEBI" id="CHEBI:16708"/>
        <dbReference type="ChEBI" id="CHEBI:43474"/>
        <dbReference type="ChEBI" id="CHEBI:68688"/>
        <dbReference type="ChEBI" id="CHEBI:456215"/>
        <dbReference type="EC" id="2.4.2.57"/>
    </reaction>
</comment>
<comment type="catalytic activity">
    <reaction evidence="1">
        <text>CMP + phosphate = cytosine + alpha-D-ribose 1,5-bisphosphate</text>
        <dbReference type="Rhea" id="RHEA:36987"/>
        <dbReference type="ChEBI" id="CHEBI:16040"/>
        <dbReference type="ChEBI" id="CHEBI:43474"/>
        <dbReference type="ChEBI" id="CHEBI:60377"/>
        <dbReference type="ChEBI" id="CHEBI:68688"/>
        <dbReference type="EC" id="2.4.2.57"/>
    </reaction>
</comment>
<comment type="catalytic activity">
    <reaction evidence="1">
        <text>UMP + phosphate = alpha-D-ribose 1,5-bisphosphate + uracil</text>
        <dbReference type="Rhea" id="RHEA:36991"/>
        <dbReference type="ChEBI" id="CHEBI:17568"/>
        <dbReference type="ChEBI" id="CHEBI:43474"/>
        <dbReference type="ChEBI" id="CHEBI:57865"/>
        <dbReference type="ChEBI" id="CHEBI:68688"/>
        <dbReference type="EC" id="2.4.2.57"/>
    </reaction>
</comment>
<comment type="similarity">
    <text evidence="1">Belongs to the thymidine/pyrimidine-nucleoside phosphorylase family. Type 2 subfamily.</text>
</comment>
<keyword id="KW-0328">Glycosyltransferase</keyword>
<keyword id="KW-1185">Reference proteome</keyword>
<keyword id="KW-0808">Transferase</keyword>
<reference key="1">
    <citation type="journal article" date="2005" name="Genome Res.">
        <title>Living with two extremes: conclusions from the genome sequence of Natronomonas pharaonis.</title>
        <authorList>
            <person name="Falb M."/>
            <person name="Pfeiffer F."/>
            <person name="Palm P."/>
            <person name="Rodewald K."/>
            <person name="Hickmann V."/>
            <person name="Tittor J."/>
            <person name="Oesterhelt D."/>
        </authorList>
    </citation>
    <scope>NUCLEOTIDE SEQUENCE [LARGE SCALE GENOMIC DNA]</scope>
    <source>
        <strain>ATCC 35678 / DSM 2160 / CIP 103997 / JCM 8858 / NBRC 14720 / NCIMB 2260 / Gabara</strain>
    </source>
</reference>